<dbReference type="EMBL" id="BA000007">
    <property type="protein sequence ID" value="BAB35528.1"/>
    <property type="molecule type" value="Genomic_DNA"/>
</dbReference>
<dbReference type="EMBL" id="AE005174">
    <property type="protein sequence ID" value="AAG56268.1"/>
    <property type="molecule type" value="Genomic_DNA"/>
</dbReference>
<dbReference type="PIR" id="A90892">
    <property type="entry name" value="A90892"/>
</dbReference>
<dbReference type="PIR" id="H85725">
    <property type="entry name" value="H85725"/>
</dbReference>
<dbReference type="RefSeq" id="NP_310132.1">
    <property type="nucleotide sequence ID" value="NC_002695.1"/>
</dbReference>
<dbReference type="RefSeq" id="WP_000543386.1">
    <property type="nucleotide sequence ID" value="NZ_VOAI01000024.1"/>
</dbReference>
<dbReference type="SMR" id="Q8XAX0"/>
<dbReference type="STRING" id="155864.Z2208"/>
<dbReference type="GeneID" id="917320"/>
<dbReference type="KEGG" id="ece:Z2208"/>
<dbReference type="KEGG" id="ecs:ECs_2105"/>
<dbReference type="PATRIC" id="fig|386585.9.peg.2211"/>
<dbReference type="HOGENOM" id="CLU_2842804_0_0_6"/>
<dbReference type="OMA" id="YKGIMSV"/>
<dbReference type="Proteomes" id="UP000000558">
    <property type="component" value="Chromosome"/>
</dbReference>
<dbReference type="Proteomes" id="UP000002519">
    <property type="component" value="Chromosome"/>
</dbReference>
<dbReference type="GO" id="GO:0005886">
    <property type="term" value="C:plasma membrane"/>
    <property type="evidence" value="ECO:0007669"/>
    <property type="project" value="UniProtKB-SubCell"/>
</dbReference>
<dbReference type="InterPro" id="IPR031411">
    <property type="entry name" value="SafA"/>
</dbReference>
<dbReference type="Pfam" id="PF17073">
    <property type="entry name" value="SafA"/>
    <property type="match status" value="1"/>
</dbReference>
<organism>
    <name type="scientific">Escherichia coli O157:H7</name>
    <dbReference type="NCBI Taxonomy" id="83334"/>
    <lineage>
        <taxon>Bacteria</taxon>
        <taxon>Pseudomonadati</taxon>
        <taxon>Pseudomonadota</taxon>
        <taxon>Gammaproteobacteria</taxon>
        <taxon>Enterobacterales</taxon>
        <taxon>Enterobacteriaceae</taxon>
        <taxon>Escherichia</taxon>
    </lineage>
</organism>
<reference key="1">
    <citation type="journal article" date="2001" name="Nature">
        <title>Genome sequence of enterohaemorrhagic Escherichia coli O157:H7.</title>
        <authorList>
            <person name="Perna N.T."/>
            <person name="Plunkett G. III"/>
            <person name="Burland V."/>
            <person name="Mau B."/>
            <person name="Glasner J.D."/>
            <person name="Rose D.J."/>
            <person name="Mayhew G.F."/>
            <person name="Evans P.S."/>
            <person name="Gregor J."/>
            <person name="Kirkpatrick H.A."/>
            <person name="Posfai G."/>
            <person name="Hackett J."/>
            <person name="Klink S."/>
            <person name="Boutin A."/>
            <person name="Shao Y."/>
            <person name="Miller L."/>
            <person name="Grotbeck E.J."/>
            <person name="Davis N.W."/>
            <person name="Lim A."/>
            <person name="Dimalanta E.T."/>
            <person name="Potamousis K."/>
            <person name="Apodaca J."/>
            <person name="Anantharaman T.S."/>
            <person name="Lin J."/>
            <person name="Yen G."/>
            <person name="Schwartz D.C."/>
            <person name="Welch R.A."/>
            <person name="Blattner F.R."/>
        </authorList>
    </citation>
    <scope>NUCLEOTIDE SEQUENCE [LARGE SCALE GENOMIC DNA]</scope>
    <source>
        <strain>O157:H7 / EDL933 / ATCC 700927 / EHEC</strain>
    </source>
</reference>
<reference key="2">
    <citation type="journal article" date="2001" name="DNA Res.">
        <title>Complete genome sequence of enterohemorrhagic Escherichia coli O157:H7 and genomic comparison with a laboratory strain K-12.</title>
        <authorList>
            <person name="Hayashi T."/>
            <person name="Makino K."/>
            <person name="Ohnishi M."/>
            <person name="Kurokawa K."/>
            <person name="Ishii K."/>
            <person name="Yokoyama K."/>
            <person name="Han C.-G."/>
            <person name="Ohtsubo E."/>
            <person name="Nakayama K."/>
            <person name="Murata T."/>
            <person name="Tanaka M."/>
            <person name="Tobe T."/>
            <person name="Iida T."/>
            <person name="Takami H."/>
            <person name="Honda T."/>
            <person name="Sasakawa C."/>
            <person name="Ogasawara N."/>
            <person name="Yasunaga T."/>
            <person name="Kuhara S."/>
            <person name="Shiba T."/>
            <person name="Hattori M."/>
            <person name="Shinagawa H."/>
        </authorList>
    </citation>
    <scope>NUCLEOTIDE SEQUENCE [LARGE SCALE GENOMIC DNA]</scope>
    <source>
        <strain>O157:H7 / Sakai / RIMD 0509952 / EHEC</strain>
    </source>
</reference>
<evidence type="ECO:0000250" key="1"/>
<evidence type="ECO:0000255" key="2"/>
<evidence type="ECO:0000305" key="3"/>
<sequence length="65" mass="7328">MHATTVKNKITQRDNYKEIMSVIVVILLLTLTLIAIFSAIDQLGISEMGRIARDLTHFIVNSLQD</sequence>
<accession>Q8XAX0</accession>
<accession>Q7AE10</accession>
<gene>
    <name type="primary">safA</name>
    <name type="ordered locus">Z2208</name>
    <name type="ordered locus">ECs2105</name>
</gene>
<protein>
    <recommendedName>
        <fullName>Two-component-system connector protein SafA</fullName>
    </recommendedName>
</protein>
<comment type="function">
    <text evidence="1">Connects the signal transduction between the two-component systems EvgS/EvgA and PhoQ/PhoP, by directly interacting with PhoQ and thus activating the PhoQ/PhoP system, in response to acid stress conditions.</text>
</comment>
<comment type="subunit">
    <text evidence="1">Interacts with PhoQ.</text>
</comment>
<comment type="subcellular location">
    <subcellularLocation>
        <location evidence="1">Cell inner membrane</location>
        <topology evidence="1">Single-pass type II membrane protein</topology>
    </subcellularLocation>
</comment>
<comment type="induction">
    <text evidence="1">By acid stress, via the EvgS/EvgA system.</text>
</comment>
<comment type="similarity">
    <text evidence="3">Belongs to the SafA family.</text>
</comment>
<keyword id="KW-0997">Cell inner membrane</keyword>
<keyword id="KW-1003">Cell membrane</keyword>
<keyword id="KW-0472">Membrane</keyword>
<keyword id="KW-1185">Reference proteome</keyword>
<keyword id="KW-0735">Signal-anchor</keyword>
<keyword id="KW-0346">Stress response</keyword>
<keyword id="KW-0812">Transmembrane</keyword>
<keyword id="KW-1133">Transmembrane helix</keyword>
<proteinExistence type="inferred from homology"/>
<feature type="chain" id="PRO_0000223716" description="Two-component-system connector protein SafA">
    <location>
        <begin position="1"/>
        <end position="65"/>
    </location>
</feature>
<feature type="topological domain" description="Cytoplasmic" evidence="1">
    <location>
        <begin position="1"/>
        <end position="18"/>
    </location>
</feature>
<feature type="transmembrane region" description="Helical; Signal-anchor for type II membrane protein" evidence="2">
    <location>
        <begin position="19"/>
        <end position="39"/>
    </location>
</feature>
<feature type="topological domain" description="Periplasmic" evidence="1">
    <location>
        <begin position="40"/>
        <end position="65"/>
    </location>
</feature>
<name>SAFA_ECO57</name>